<protein>
    <recommendedName>
        <fullName evidence="1">Gamma-glutamyl phosphate reductase</fullName>
        <shortName evidence="1">GPR</shortName>
        <ecNumber evidence="1">1.2.1.41</ecNumber>
    </recommendedName>
    <alternativeName>
        <fullName evidence="1">Glutamate-5-semialdehyde dehydrogenase</fullName>
    </alternativeName>
    <alternativeName>
        <fullName evidence="1">Glutamyl-gamma-semialdehyde dehydrogenase</fullName>
        <shortName evidence="1">GSA dehydrogenase</shortName>
    </alternativeName>
</protein>
<comment type="function">
    <text evidence="1">Catalyzes the NADPH-dependent reduction of L-glutamate 5-phosphate into L-glutamate 5-semialdehyde and phosphate. The product spontaneously undergoes cyclization to form 1-pyrroline-5-carboxylate.</text>
</comment>
<comment type="catalytic activity">
    <reaction evidence="1">
        <text>L-glutamate 5-semialdehyde + phosphate + NADP(+) = L-glutamyl 5-phosphate + NADPH + H(+)</text>
        <dbReference type="Rhea" id="RHEA:19541"/>
        <dbReference type="ChEBI" id="CHEBI:15378"/>
        <dbReference type="ChEBI" id="CHEBI:43474"/>
        <dbReference type="ChEBI" id="CHEBI:57783"/>
        <dbReference type="ChEBI" id="CHEBI:58066"/>
        <dbReference type="ChEBI" id="CHEBI:58274"/>
        <dbReference type="ChEBI" id="CHEBI:58349"/>
        <dbReference type="EC" id="1.2.1.41"/>
    </reaction>
</comment>
<comment type="pathway">
    <text evidence="1">Amino-acid biosynthesis; L-proline biosynthesis; L-glutamate 5-semialdehyde from L-glutamate: step 2/2.</text>
</comment>
<comment type="subcellular location">
    <subcellularLocation>
        <location evidence="1">Cytoplasm</location>
    </subcellularLocation>
</comment>
<comment type="similarity">
    <text evidence="1">Belongs to the gamma-glutamyl phosphate reductase family.</text>
</comment>
<sequence>MTESVLDYMSRLGRDARAASRLLARAATAQKNRALLAAADALDAARAELSHANEQDLAAGRANGLEPAMLDRLALTPARIDDMIEGLRQVATLPDPIGEIRDMRYVPSGIQIGKMRVPLGVVGIIYESRPNVTIDAASLCLKSGNATILRGGSEAIHSNQAIARCIQQGLAEAGLPAAAVQVVETTDRAAVGALISMPEYVDVIVPRGGKGLIERISREAKVPVIKHLDGICHVYIDVAADLDKAIRVADNAKTQRYAPCNTMETLLVHAGIAERALPPLATIYREKGVELRGDAATRALLGADVLEATEEDWRTEYNAPILSIRIVDGLDAAIEHINTYGSQHTDAIITENFSDARRFLAEVDSASVMVNASTRFADGFEYGLGAEIGISTDKLHARGPVGLEGLTSEKYVVFGDGHVRT</sequence>
<accession>Q02SH4</accession>
<keyword id="KW-0028">Amino-acid biosynthesis</keyword>
<keyword id="KW-0963">Cytoplasm</keyword>
<keyword id="KW-0521">NADP</keyword>
<keyword id="KW-0560">Oxidoreductase</keyword>
<keyword id="KW-0641">Proline biosynthesis</keyword>
<feature type="chain" id="PRO_1000049982" description="Gamma-glutamyl phosphate reductase">
    <location>
        <begin position="1"/>
        <end position="421"/>
    </location>
</feature>
<name>PROA_PSEAB</name>
<reference key="1">
    <citation type="journal article" date="2006" name="Genome Biol.">
        <title>Genomic analysis reveals that Pseudomonas aeruginosa virulence is combinatorial.</title>
        <authorList>
            <person name="Lee D.G."/>
            <person name="Urbach J.M."/>
            <person name="Wu G."/>
            <person name="Liberati N.T."/>
            <person name="Feinbaum R.L."/>
            <person name="Miyata S."/>
            <person name="Diggins L.T."/>
            <person name="He J."/>
            <person name="Saucier M."/>
            <person name="Deziel E."/>
            <person name="Friedman L."/>
            <person name="Li L."/>
            <person name="Grills G."/>
            <person name="Montgomery K."/>
            <person name="Kucherlapati R."/>
            <person name="Rahme L.G."/>
            <person name="Ausubel F.M."/>
        </authorList>
    </citation>
    <scope>NUCLEOTIDE SEQUENCE [LARGE SCALE GENOMIC DNA]</scope>
    <source>
        <strain>UCBPP-PA14</strain>
    </source>
</reference>
<gene>
    <name evidence="1" type="primary">proA</name>
    <name type="ordered locus">PA14_12010</name>
</gene>
<proteinExistence type="inferred from homology"/>
<organism>
    <name type="scientific">Pseudomonas aeruginosa (strain UCBPP-PA14)</name>
    <dbReference type="NCBI Taxonomy" id="208963"/>
    <lineage>
        <taxon>Bacteria</taxon>
        <taxon>Pseudomonadati</taxon>
        <taxon>Pseudomonadota</taxon>
        <taxon>Gammaproteobacteria</taxon>
        <taxon>Pseudomonadales</taxon>
        <taxon>Pseudomonadaceae</taxon>
        <taxon>Pseudomonas</taxon>
    </lineage>
</organism>
<evidence type="ECO:0000255" key="1">
    <source>
        <dbReference type="HAMAP-Rule" id="MF_00412"/>
    </source>
</evidence>
<dbReference type="EC" id="1.2.1.41" evidence="1"/>
<dbReference type="EMBL" id="CP000438">
    <property type="protein sequence ID" value="ABJ13281.1"/>
    <property type="molecule type" value="Genomic_DNA"/>
</dbReference>
<dbReference type="RefSeq" id="WP_003100303.1">
    <property type="nucleotide sequence ID" value="NZ_CP034244.1"/>
</dbReference>
<dbReference type="SMR" id="Q02SH4"/>
<dbReference type="KEGG" id="pau:PA14_12010"/>
<dbReference type="PseudoCAP" id="PA14_12010"/>
<dbReference type="HOGENOM" id="CLU_030231_0_0_6"/>
<dbReference type="BioCyc" id="PAER208963:G1G74-997-MONOMER"/>
<dbReference type="UniPathway" id="UPA00098">
    <property type="reaction ID" value="UER00360"/>
</dbReference>
<dbReference type="Proteomes" id="UP000000653">
    <property type="component" value="Chromosome"/>
</dbReference>
<dbReference type="GO" id="GO:0005737">
    <property type="term" value="C:cytoplasm"/>
    <property type="evidence" value="ECO:0007669"/>
    <property type="project" value="UniProtKB-SubCell"/>
</dbReference>
<dbReference type="GO" id="GO:0004350">
    <property type="term" value="F:glutamate-5-semialdehyde dehydrogenase activity"/>
    <property type="evidence" value="ECO:0007669"/>
    <property type="project" value="UniProtKB-UniRule"/>
</dbReference>
<dbReference type="GO" id="GO:0050661">
    <property type="term" value="F:NADP binding"/>
    <property type="evidence" value="ECO:0007669"/>
    <property type="project" value="InterPro"/>
</dbReference>
<dbReference type="GO" id="GO:0055129">
    <property type="term" value="P:L-proline biosynthetic process"/>
    <property type="evidence" value="ECO:0007669"/>
    <property type="project" value="UniProtKB-UniRule"/>
</dbReference>
<dbReference type="CDD" id="cd07079">
    <property type="entry name" value="ALDH_F18-19_ProA-GPR"/>
    <property type="match status" value="1"/>
</dbReference>
<dbReference type="FunFam" id="3.40.309.10:FF:000006">
    <property type="entry name" value="Gamma-glutamyl phosphate reductase"/>
    <property type="match status" value="1"/>
</dbReference>
<dbReference type="Gene3D" id="3.40.605.10">
    <property type="entry name" value="Aldehyde Dehydrogenase, Chain A, domain 1"/>
    <property type="match status" value="1"/>
</dbReference>
<dbReference type="Gene3D" id="3.40.309.10">
    <property type="entry name" value="Aldehyde Dehydrogenase, Chain A, domain 2"/>
    <property type="match status" value="1"/>
</dbReference>
<dbReference type="HAMAP" id="MF_00412">
    <property type="entry name" value="ProA"/>
    <property type="match status" value="1"/>
</dbReference>
<dbReference type="InterPro" id="IPR016161">
    <property type="entry name" value="Ald_DH/histidinol_DH"/>
</dbReference>
<dbReference type="InterPro" id="IPR016163">
    <property type="entry name" value="Ald_DH_C"/>
</dbReference>
<dbReference type="InterPro" id="IPR016162">
    <property type="entry name" value="Ald_DH_N"/>
</dbReference>
<dbReference type="InterPro" id="IPR015590">
    <property type="entry name" value="Aldehyde_DH_dom"/>
</dbReference>
<dbReference type="InterPro" id="IPR020593">
    <property type="entry name" value="G-glutamylP_reductase_CS"/>
</dbReference>
<dbReference type="InterPro" id="IPR012134">
    <property type="entry name" value="Glu-5-SA_DH"/>
</dbReference>
<dbReference type="InterPro" id="IPR000965">
    <property type="entry name" value="GPR_dom"/>
</dbReference>
<dbReference type="NCBIfam" id="NF001221">
    <property type="entry name" value="PRK00197.1"/>
    <property type="match status" value="1"/>
</dbReference>
<dbReference type="NCBIfam" id="TIGR00407">
    <property type="entry name" value="proA"/>
    <property type="match status" value="1"/>
</dbReference>
<dbReference type="PANTHER" id="PTHR11063:SF8">
    <property type="entry name" value="DELTA-1-PYRROLINE-5-CARBOXYLATE SYNTHASE"/>
    <property type="match status" value="1"/>
</dbReference>
<dbReference type="PANTHER" id="PTHR11063">
    <property type="entry name" value="GLUTAMATE SEMIALDEHYDE DEHYDROGENASE"/>
    <property type="match status" value="1"/>
</dbReference>
<dbReference type="Pfam" id="PF00171">
    <property type="entry name" value="Aldedh"/>
    <property type="match status" value="2"/>
</dbReference>
<dbReference type="PIRSF" id="PIRSF000151">
    <property type="entry name" value="GPR"/>
    <property type="match status" value="1"/>
</dbReference>
<dbReference type="SUPFAM" id="SSF53720">
    <property type="entry name" value="ALDH-like"/>
    <property type="match status" value="1"/>
</dbReference>
<dbReference type="PROSITE" id="PS01223">
    <property type="entry name" value="PROA"/>
    <property type="match status" value="1"/>
</dbReference>